<accession>Q9YCQ6</accession>
<protein>
    <recommendedName>
        <fullName evidence="1">Glutamine--fructose-6-phosphate aminotransferase [isomerizing]</fullName>
        <ecNumber evidence="1">2.6.1.16</ecNumber>
    </recommendedName>
    <alternativeName>
        <fullName evidence="1">D-fructose-6-phosphate amidotransferase</fullName>
    </alternativeName>
    <alternativeName>
        <fullName evidence="1">GFAT</fullName>
    </alternativeName>
    <alternativeName>
        <fullName evidence="1">Glucosamine-6-phosphate synthase</fullName>
    </alternativeName>
    <alternativeName>
        <fullName evidence="1">Hexosephosphate aminotransferase</fullName>
    </alternativeName>
    <alternativeName>
        <fullName evidence="1">L-glutamine--D-fructose-6-phosphate amidotransferase</fullName>
    </alternativeName>
</protein>
<sequence>MCGIIGLAFAEGNSVAGALVRGLKRLEYRGYDSMGVAVIEPPGRLVVRKAAGKIGEVVRRTGVLSLRGRVGIGHTRWATHGPPNDVNAHPHTDCGGRVAVVHNGVIRNYASLRRELEARGHRLVSETDTELVAHLIEEYLGRGYSFLEALSLLGRVLRGSYALALLHLGEPDKVYFLRYKSPLVVGLGEGVNAVASDITAVLDVARDVIVLEDGEFGWISPEGVAIYRPRGDGGFEPLPPGALEERVKRVEWTPESASKAGYPHFMLKEIYEQPRALAETFEGIIEDPALLRAAGLVAGAGRLLIVGAGTSFHAGLVGHYYLSRLAGILGHPVVASEHKVYTPGVDGETVVVAVSQSGETYDTLEAVREWRGRGARVIGVTNVVGSALDREADVTLYLRAGPEIGVAATKTFLAQTILLQTLSIAAAGEAGRLTSGETRELTGVLEGAPDAARRAILASEGAAREAASLLKGAGSMYIIGRGLGGRLAMEAALKVKEVSYIHAEAYPAGESKHGPIALVEPGFKVYVVATSDSPEVMGNAIEMKARGASVTVVAPSDLQLDTPEGIEVLKMPPTGGETLLDPYSLTPYFQLLAYHLAVARGYDPDKPRNLAKTVTVE</sequence>
<proteinExistence type="inferred from homology"/>
<evidence type="ECO:0000255" key="1">
    <source>
        <dbReference type="HAMAP-Rule" id="MF_00164"/>
    </source>
</evidence>
<comment type="function">
    <text evidence="1">Catalyzes the first step in hexosamine metabolism, converting fructose-6P into glucosamine-6P using glutamine as a nitrogen source.</text>
</comment>
<comment type="catalytic activity">
    <reaction evidence="1">
        <text>D-fructose 6-phosphate + L-glutamine = D-glucosamine 6-phosphate + L-glutamate</text>
        <dbReference type="Rhea" id="RHEA:13237"/>
        <dbReference type="ChEBI" id="CHEBI:29985"/>
        <dbReference type="ChEBI" id="CHEBI:58359"/>
        <dbReference type="ChEBI" id="CHEBI:58725"/>
        <dbReference type="ChEBI" id="CHEBI:61527"/>
        <dbReference type="EC" id="2.6.1.16"/>
    </reaction>
</comment>
<comment type="subunit">
    <text evidence="1">Homodimer.</text>
</comment>
<comment type="subcellular location">
    <subcellularLocation>
        <location evidence="1">Cytoplasm</location>
    </subcellularLocation>
</comment>
<keyword id="KW-0032">Aminotransferase</keyword>
<keyword id="KW-0963">Cytoplasm</keyword>
<keyword id="KW-0315">Glutamine amidotransferase</keyword>
<keyword id="KW-1185">Reference proteome</keyword>
<keyword id="KW-0677">Repeat</keyword>
<keyword id="KW-0808">Transferase</keyword>
<organism>
    <name type="scientific">Aeropyrum pernix (strain ATCC 700893 / DSM 11879 / JCM 9820 / NBRC 100138 / K1)</name>
    <dbReference type="NCBI Taxonomy" id="272557"/>
    <lineage>
        <taxon>Archaea</taxon>
        <taxon>Thermoproteota</taxon>
        <taxon>Thermoprotei</taxon>
        <taxon>Desulfurococcales</taxon>
        <taxon>Desulfurococcaceae</taxon>
        <taxon>Aeropyrum</taxon>
    </lineage>
</organism>
<name>GLMS_AERPE</name>
<reference key="1">
    <citation type="journal article" date="1999" name="DNA Res.">
        <title>Complete genome sequence of an aerobic hyper-thermophilic crenarchaeon, Aeropyrum pernix K1.</title>
        <authorList>
            <person name="Kawarabayasi Y."/>
            <person name="Hino Y."/>
            <person name="Horikawa H."/>
            <person name="Yamazaki S."/>
            <person name="Haikawa Y."/>
            <person name="Jin-no K."/>
            <person name="Takahashi M."/>
            <person name="Sekine M."/>
            <person name="Baba S."/>
            <person name="Ankai A."/>
            <person name="Kosugi H."/>
            <person name="Hosoyama A."/>
            <person name="Fukui S."/>
            <person name="Nagai Y."/>
            <person name="Nishijima K."/>
            <person name="Nakazawa H."/>
            <person name="Takamiya M."/>
            <person name="Masuda S."/>
            <person name="Funahashi T."/>
            <person name="Tanaka T."/>
            <person name="Kudoh Y."/>
            <person name="Yamazaki J."/>
            <person name="Kushida N."/>
            <person name="Oguchi A."/>
            <person name="Aoki K."/>
            <person name="Kubota K."/>
            <person name="Nakamura Y."/>
            <person name="Nomura N."/>
            <person name="Sako Y."/>
            <person name="Kikuchi H."/>
        </authorList>
    </citation>
    <scope>NUCLEOTIDE SEQUENCE [LARGE SCALE GENOMIC DNA]</scope>
    <source>
        <strain>ATCC 700893 / DSM 11879 / JCM 9820 / NBRC 100138 / K1</strain>
    </source>
</reference>
<gene>
    <name evidence="1" type="primary">glmS</name>
    <name type="ordered locus">APE_1205.1</name>
</gene>
<feature type="initiator methionine" description="Removed" evidence="1">
    <location>
        <position position="1"/>
    </location>
</feature>
<feature type="chain" id="PRO_0000135422" description="Glutamine--fructose-6-phosphate aminotransferase [isomerizing]">
    <location>
        <begin position="2"/>
        <end position="617"/>
    </location>
</feature>
<feature type="domain" description="Glutamine amidotransferase type-2" evidence="1">
    <location>
        <begin position="2"/>
        <end position="222"/>
    </location>
</feature>
<feature type="domain" description="SIS 1" evidence="1">
    <location>
        <begin position="293"/>
        <end position="432"/>
    </location>
</feature>
<feature type="domain" description="SIS 2" evidence="1">
    <location>
        <begin position="466"/>
        <end position="607"/>
    </location>
</feature>
<feature type="active site" description="Nucleophile; for GATase activity" evidence="1">
    <location>
        <position position="2"/>
    </location>
</feature>
<feature type="active site" description="For Fru-6P isomerization activity" evidence="1">
    <location>
        <position position="612"/>
    </location>
</feature>
<dbReference type="EC" id="2.6.1.16" evidence="1"/>
<dbReference type="EMBL" id="BA000002">
    <property type="protein sequence ID" value="BAA80191.2"/>
    <property type="molecule type" value="Genomic_DNA"/>
</dbReference>
<dbReference type="PIR" id="A72592">
    <property type="entry name" value="A72592"/>
</dbReference>
<dbReference type="RefSeq" id="WP_010866225.1">
    <property type="nucleotide sequence ID" value="NC_000854.2"/>
</dbReference>
<dbReference type="SMR" id="Q9YCQ6"/>
<dbReference type="STRING" id="272557.APE_1205.1"/>
<dbReference type="EnsemblBacteria" id="BAA80191">
    <property type="protein sequence ID" value="BAA80191"/>
    <property type="gene ID" value="APE_1205.1"/>
</dbReference>
<dbReference type="GeneID" id="1445855"/>
<dbReference type="KEGG" id="ape:APE_1205.1"/>
<dbReference type="PATRIC" id="fig|272557.25.peg.829"/>
<dbReference type="eggNOG" id="arCOG00057">
    <property type="taxonomic scope" value="Archaea"/>
</dbReference>
<dbReference type="Proteomes" id="UP000002518">
    <property type="component" value="Chromosome"/>
</dbReference>
<dbReference type="GO" id="GO:0005737">
    <property type="term" value="C:cytoplasm"/>
    <property type="evidence" value="ECO:0007669"/>
    <property type="project" value="UniProtKB-SubCell"/>
</dbReference>
<dbReference type="GO" id="GO:0097367">
    <property type="term" value="F:carbohydrate derivative binding"/>
    <property type="evidence" value="ECO:0007669"/>
    <property type="project" value="InterPro"/>
</dbReference>
<dbReference type="GO" id="GO:0004360">
    <property type="term" value="F:glutamine-fructose-6-phosphate transaminase (isomerizing) activity"/>
    <property type="evidence" value="ECO:0007669"/>
    <property type="project" value="UniProtKB-UniRule"/>
</dbReference>
<dbReference type="GO" id="GO:0005975">
    <property type="term" value="P:carbohydrate metabolic process"/>
    <property type="evidence" value="ECO:0007669"/>
    <property type="project" value="UniProtKB-UniRule"/>
</dbReference>
<dbReference type="GO" id="GO:0006002">
    <property type="term" value="P:fructose 6-phosphate metabolic process"/>
    <property type="evidence" value="ECO:0007669"/>
    <property type="project" value="TreeGrafter"/>
</dbReference>
<dbReference type="GO" id="GO:0006487">
    <property type="term" value="P:protein N-linked glycosylation"/>
    <property type="evidence" value="ECO:0007669"/>
    <property type="project" value="TreeGrafter"/>
</dbReference>
<dbReference type="GO" id="GO:0006047">
    <property type="term" value="P:UDP-N-acetylglucosamine metabolic process"/>
    <property type="evidence" value="ECO:0007669"/>
    <property type="project" value="TreeGrafter"/>
</dbReference>
<dbReference type="CDD" id="cd00714">
    <property type="entry name" value="GFAT"/>
    <property type="match status" value="1"/>
</dbReference>
<dbReference type="CDD" id="cd05008">
    <property type="entry name" value="SIS_GlmS_GlmD_1"/>
    <property type="match status" value="1"/>
</dbReference>
<dbReference type="CDD" id="cd05009">
    <property type="entry name" value="SIS_GlmS_GlmD_2"/>
    <property type="match status" value="1"/>
</dbReference>
<dbReference type="FunFam" id="3.60.20.10:FF:000006">
    <property type="entry name" value="Glutamine--fructose-6-phosphate aminotransferase [isomerizing]"/>
    <property type="match status" value="1"/>
</dbReference>
<dbReference type="Gene3D" id="3.40.50.10490">
    <property type="entry name" value="Glucose-6-phosphate isomerase like protein, domain 1"/>
    <property type="match status" value="2"/>
</dbReference>
<dbReference type="Gene3D" id="3.60.20.10">
    <property type="entry name" value="Glutamine Phosphoribosylpyrophosphate, subunit 1, domain 1"/>
    <property type="match status" value="1"/>
</dbReference>
<dbReference type="HAMAP" id="MF_00164">
    <property type="entry name" value="GlmS"/>
    <property type="match status" value="1"/>
</dbReference>
<dbReference type="InterPro" id="IPR017932">
    <property type="entry name" value="GATase_2_dom"/>
</dbReference>
<dbReference type="InterPro" id="IPR005855">
    <property type="entry name" value="GFAT"/>
</dbReference>
<dbReference type="InterPro" id="IPR047084">
    <property type="entry name" value="GFAT_N"/>
</dbReference>
<dbReference type="InterPro" id="IPR035466">
    <property type="entry name" value="GlmS/AgaS_SIS"/>
</dbReference>
<dbReference type="InterPro" id="IPR035490">
    <property type="entry name" value="GlmS/FrlB_SIS"/>
</dbReference>
<dbReference type="InterPro" id="IPR029055">
    <property type="entry name" value="Ntn_hydrolases_N"/>
</dbReference>
<dbReference type="InterPro" id="IPR001347">
    <property type="entry name" value="SIS_dom"/>
</dbReference>
<dbReference type="InterPro" id="IPR046348">
    <property type="entry name" value="SIS_dom_sf"/>
</dbReference>
<dbReference type="NCBIfam" id="TIGR01135">
    <property type="entry name" value="glmS"/>
    <property type="match status" value="1"/>
</dbReference>
<dbReference type="NCBIfam" id="NF001484">
    <property type="entry name" value="PRK00331.1"/>
    <property type="match status" value="1"/>
</dbReference>
<dbReference type="PANTHER" id="PTHR10937">
    <property type="entry name" value="GLUCOSAMINE--FRUCTOSE-6-PHOSPHATE AMINOTRANSFERASE, ISOMERIZING"/>
    <property type="match status" value="1"/>
</dbReference>
<dbReference type="PANTHER" id="PTHR10937:SF0">
    <property type="entry name" value="GLUTAMINE--FRUCTOSE-6-PHOSPHATE TRANSAMINASE (ISOMERIZING)"/>
    <property type="match status" value="1"/>
</dbReference>
<dbReference type="Pfam" id="PF13522">
    <property type="entry name" value="GATase_6"/>
    <property type="match status" value="1"/>
</dbReference>
<dbReference type="Pfam" id="PF01380">
    <property type="entry name" value="SIS"/>
    <property type="match status" value="2"/>
</dbReference>
<dbReference type="SUPFAM" id="SSF56235">
    <property type="entry name" value="N-terminal nucleophile aminohydrolases (Ntn hydrolases)"/>
    <property type="match status" value="1"/>
</dbReference>
<dbReference type="SUPFAM" id="SSF53697">
    <property type="entry name" value="SIS domain"/>
    <property type="match status" value="1"/>
</dbReference>
<dbReference type="PROSITE" id="PS51278">
    <property type="entry name" value="GATASE_TYPE_2"/>
    <property type="match status" value="1"/>
</dbReference>
<dbReference type="PROSITE" id="PS51464">
    <property type="entry name" value="SIS"/>
    <property type="match status" value="2"/>
</dbReference>